<name>PG052_VACCP</name>
<reference key="1">
    <citation type="journal article" date="1988" name="Biotekhnologiya">
        <title>Structural-functional organization of segment of vaccinia virus genome.</title>
        <authorList>
            <person name="Mikryukov N.N."/>
            <person name="Chizhikov V.E."/>
            <person name="Prikhod'Ko G.G."/>
            <person name="Urmmanov I.M."/>
            <person name="Serpinskii O.I."/>
            <person name="Blinov V.M."/>
            <person name="Nikulin A.E."/>
            <person name="Vasilenko S.K."/>
        </authorList>
    </citation>
    <scope>NUCLEOTIDE SEQUENCE [GENOMIC DNA]</scope>
</reference>
<organismHost>
    <name type="scientific">Homo sapiens</name>
    <name type="common">Human</name>
    <dbReference type="NCBI Taxonomy" id="9606"/>
</organismHost>
<comment type="induction">
    <text evidence="1">Expressed in the early phase of the viral replicative cycle.</text>
</comment>
<comment type="similarity">
    <text evidence="3">Belongs to the orthopoxvirus OPG052 family.</text>
</comment>
<keyword id="KW-0244">Early protein</keyword>
<sequence>MEGSKRRHDSRRLQQEQEQPRPRTPPSYEEIAKYGHSFNVKRFTNKEMCLKNDYPRIISYNPPPK</sequence>
<gene>
    <name type="primary">OPG052</name>
    <name type="ORF">F10</name>
</gene>
<protein>
    <recommendedName>
        <fullName>Protein OPG052</fullName>
    </recommendedName>
    <alternativeName>
        <fullName>Protein F10</fullName>
    </alternativeName>
    <alternativeName>
        <fullName>Protein F8</fullName>
    </alternativeName>
</protein>
<feature type="chain" id="PRO_0000099488" description="Protein OPG052">
    <location>
        <begin position="1"/>
        <end position="65"/>
    </location>
</feature>
<feature type="region of interest" description="Disordered" evidence="2">
    <location>
        <begin position="1"/>
        <end position="29"/>
    </location>
</feature>
<feature type="compositionally biased region" description="Basic residues" evidence="2">
    <location>
        <begin position="1"/>
        <end position="10"/>
    </location>
</feature>
<feature type="compositionally biased region" description="Basic and acidic residues" evidence="2">
    <location>
        <begin position="11"/>
        <end position="21"/>
    </location>
</feature>
<proteinExistence type="inferred from homology"/>
<organism>
    <name type="scientific">Vaccinia virus (strain L-IVP)</name>
    <name type="common">VACV</name>
    <dbReference type="NCBI Taxonomy" id="31531"/>
    <lineage>
        <taxon>Viruses</taxon>
        <taxon>Varidnaviria</taxon>
        <taxon>Bamfordvirae</taxon>
        <taxon>Nucleocytoviricota</taxon>
        <taxon>Pokkesviricetes</taxon>
        <taxon>Chitovirales</taxon>
        <taxon>Poxviridae</taxon>
        <taxon>Chordopoxvirinae</taxon>
        <taxon>Orthopoxvirus</taxon>
        <taxon>Vaccinia virus</taxon>
    </lineage>
</organism>
<accession>P29887</accession>
<dbReference type="EMBL" id="M57977">
    <property type="protein sequence ID" value="AAA48290.1"/>
    <property type="molecule type" value="Genomic_DNA"/>
</dbReference>
<dbReference type="InterPro" id="IPR008726">
    <property type="entry name" value="Poxvirus_F8"/>
</dbReference>
<dbReference type="Pfam" id="PF05886">
    <property type="entry name" value="Orthopox_F8"/>
    <property type="match status" value="1"/>
</dbReference>
<evidence type="ECO:0000250" key="1">
    <source>
        <dbReference type="UniProtKB" id="P24360"/>
    </source>
</evidence>
<evidence type="ECO:0000256" key="2">
    <source>
        <dbReference type="SAM" id="MobiDB-lite"/>
    </source>
</evidence>
<evidence type="ECO:0000305" key="3"/>